<organism>
    <name type="scientific">Burkholderia orbicola (strain AU 1054)</name>
    <dbReference type="NCBI Taxonomy" id="331271"/>
    <lineage>
        <taxon>Bacteria</taxon>
        <taxon>Pseudomonadati</taxon>
        <taxon>Pseudomonadota</taxon>
        <taxon>Betaproteobacteria</taxon>
        <taxon>Burkholderiales</taxon>
        <taxon>Burkholderiaceae</taxon>
        <taxon>Burkholderia</taxon>
        <taxon>Burkholderia cepacia complex</taxon>
        <taxon>Burkholderia orbicola</taxon>
    </lineage>
</organism>
<keyword id="KW-0119">Carbohydrate metabolism</keyword>
<keyword id="KW-0413">Isomerase</keyword>
<keyword id="KW-0521">NADP</keyword>
<dbReference type="EC" id="5.1.3.20" evidence="1"/>
<dbReference type="EMBL" id="CP000378">
    <property type="protein sequence ID" value="ABF75485.1"/>
    <property type="molecule type" value="Genomic_DNA"/>
</dbReference>
<dbReference type="SMR" id="Q1BY20"/>
<dbReference type="HOGENOM" id="CLU_007383_1_3_4"/>
<dbReference type="UniPathway" id="UPA00356">
    <property type="reaction ID" value="UER00440"/>
</dbReference>
<dbReference type="GO" id="GO:0008712">
    <property type="term" value="F:ADP-glyceromanno-heptose 6-epimerase activity"/>
    <property type="evidence" value="ECO:0007669"/>
    <property type="project" value="UniProtKB-UniRule"/>
</dbReference>
<dbReference type="GO" id="GO:0050661">
    <property type="term" value="F:NADP binding"/>
    <property type="evidence" value="ECO:0007669"/>
    <property type="project" value="InterPro"/>
</dbReference>
<dbReference type="GO" id="GO:0097171">
    <property type="term" value="P:ADP-L-glycero-beta-D-manno-heptose biosynthetic process"/>
    <property type="evidence" value="ECO:0007669"/>
    <property type="project" value="UniProtKB-UniPathway"/>
</dbReference>
<dbReference type="GO" id="GO:0005975">
    <property type="term" value="P:carbohydrate metabolic process"/>
    <property type="evidence" value="ECO:0007669"/>
    <property type="project" value="UniProtKB-UniRule"/>
</dbReference>
<dbReference type="CDD" id="cd05248">
    <property type="entry name" value="ADP_GME_SDR_e"/>
    <property type="match status" value="1"/>
</dbReference>
<dbReference type="Gene3D" id="3.40.50.720">
    <property type="entry name" value="NAD(P)-binding Rossmann-like Domain"/>
    <property type="match status" value="1"/>
</dbReference>
<dbReference type="Gene3D" id="3.90.25.10">
    <property type="entry name" value="UDP-galactose 4-epimerase, domain 1"/>
    <property type="match status" value="1"/>
</dbReference>
<dbReference type="HAMAP" id="MF_01601">
    <property type="entry name" value="Heptose_epimerase"/>
    <property type="match status" value="1"/>
</dbReference>
<dbReference type="InterPro" id="IPR001509">
    <property type="entry name" value="Epimerase_deHydtase"/>
</dbReference>
<dbReference type="InterPro" id="IPR011912">
    <property type="entry name" value="Heptose_epim"/>
</dbReference>
<dbReference type="InterPro" id="IPR036291">
    <property type="entry name" value="NAD(P)-bd_dom_sf"/>
</dbReference>
<dbReference type="NCBIfam" id="TIGR02197">
    <property type="entry name" value="heptose_epim"/>
    <property type="match status" value="1"/>
</dbReference>
<dbReference type="PANTHER" id="PTHR43103:SF3">
    <property type="entry name" value="ADP-L-GLYCERO-D-MANNO-HEPTOSE-6-EPIMERASE"/>
    <property type="match status" value="1"/>
</dbReference>
<dbReference type="PANTHER" id="PTHR43103">
    <property type="entry name" value="NUCLEOSIDE-DIPHOSPHATE-SUGAR EPIMERASE"/>
    <property type="match status" value="1"/>
</dbReference>
<dbReference type="Pfam" id="PF01370">
    <property type="entry name" value="Epimerase"/>
    <property type="match status" value="1"/>
</dbReference>
<dbReference type="SUPFAM" id="SSF51735">
    <property type="entry name" value="NAD(P)-binding Rossmann-fold domains"/>
    <property type="match status" value="1"/>
</dbReference>
<proteinExistence type="inferred from homology"/>
<reference key="1">
    <citation type="submission" date="2006-05" db="EMBL/GenBank/DDBJ databases">
        <title>Complete sequence of chromosome 1 of Burkholderia cenocepacia AU 1054.</title>
        <authorList>
            <consortium name="US DOE Joint Genome Institute"/>
            <person name="Copeland A."/>
            <person name="Lucas S."/>
            <person name="Lapidus A."/>
            <person name="Barry K."/>
            <person name="Detter J.C."/>
            <person name="Glavina del Rio T."/>
            <person name="Hammon N."/>
            <person name="Israni S."/>
            <person name="Dalin E."/>
            <person name="Tice H."/>
            <person name="Pitluck S."/>
            <person name="Chain P."/>
            <person name="Malfatti S."/>
            <person name="Shin M."/>
            <person name="Vergez L."/>
            <person name="Schmutz J."/>
            <person name="Larimer F."/>
            <person name="Land M."/>
            <person name="Hauser L."/>
            <person name="Kyrpides N."/>
            <person name="Lykidis A."/>
            <person name="LiPuma J.J."/>
            <person name="Konstantinidis K."/>
            <person name="Tiedje J.M."/>
            <person name="Richardson P."/>
        </authorList>
    </citation>
    <scope>NUCLEOTIDE SEQUENCE [LARGE SCALE GENOMIC DNA]</scope>
    <source>
        <strain>AU 1054</strain>
    </source>
</reference>
<accession>Q1BY20</accession>
<gene>
    <name evidence="1" type="primary">hldD</name>
    <name type="ordered locus">Bcen_0574</name>
</gene>
<sequence length="330" mass="37133">MTLIVTGAAGFIGANIVKALNERGETRIIAVDNLTRADKFRNLVDCEIDDYLDKTEFVERFARGDFGKVRAVFHEGACSDTMETDGRYMMDNNFRYSRAVLDTCLAQGTQFLYASSAAIYGGSTRFVEERDVEAPLNVYGYSKFLFDQVIRRVLPSAKSQIAGFRYFNVYGPRETHKGRMASVAFHNFNQFRAEGKVKLFGEYNGYAPGEQTRDFVSVEDVTKVNLFFFDHPEKSGIFNLGTGRAQPFNDIASTVVNTLRALDNQAPLTLAQQVEQGLIEYVPFPDALRGKYQCFTQADQTKLRAAGYDAPFLTVQEGVDRYVRWLSGQV</sequence>
<feature type="chain" id="PRO_0000255720" description="ADP-L-glycero-D-manno-heptose-6-epimerase">
    <location>
        <begin position="1"/>
        <end position="330"/>
    </location>
</feature>
<feature type="active site" description="Proton acceptor" evidence="1">
    <location>
        <position position="139"/>
    </location>
</feature>
<feature type="active site" description="Proton acceptor" evidence="1">
    <location>
        <position position="177"/>
    </location>
</feature>
<feature type="binding site" evidence="1">
    <location>
        <begin position="11"/>
        <end position="12"/>
    </location>
    <ligand>
        <name>NADP(+)</name>
        <dbReference type="ChEBI" id="CHEBI:58349"/>
    </ligand>
</feature>
<feature type="binding site" evidence="1">
    <location>
        <begin position="32"/>
        <end position="33"/>
    </location>
    <ligand>
        <name>NADP(+)</name>
        <dbReference type="ChEBI" id="CHEBI:58349"/>
    </ligand>
</feature>
<feature type="binding site" evidence="1">
    <location>
        <position position="39"/>
    </location>
    <ligand>
        <name>NADP(+)</name>
        <dbReference type="ChEBI" id="CHEBI:58349"/>
    </ligand>
</feature>
<feature type="binding site" evidence="1">
    <location>
        <position position="54"/>
    </location>
    <ligand>
        <name>NADP(+)</name>
        <dbReference type="ChEBI" id="CHEBI:58349"/>
    </ligand>
</feature>
<feature type="binding site" evidence="1">
    <location>
        <begin position="75"/>
        <end position="79"/>
    </location>
    <ligand>
        <name>NADP(+)</name>
        <dbReference type="ChEBI" id="CHEBI:58349"/>
    </ligand>
</feature>
<feature type="binding site" evidence="1">
    <location>
        <position position="92"/>
    </location>
    <ligand>
        <name>NADP(+)</name>
        <dbReference type="ChEBI" id="CHEBI:58349"/>
    </ligand>
</feature>
<feature type="binding site" evidence="1">
    <location>
        <position position="143"/>
    </location>
    <ligand>
        <name>NADP(+)</name>
        <dbReference type="ChEBI" id="CHEBI:58349"/>
    </ligand>
</feature>
<feature type="binding site" evidence="1">
    <location>
        <position position="168"/>
    </location>
    <ligand>
        <name>substrate</name>
    </ligand>
</feature>
<feature type="binding site" evidence="1">
    <location>
        <position position="169"/>
    </location>
    <ligand>
        <name>NADP(+)</name>
        <dbReference type="ChEBI" id="CHEBI:58349"/>
    </ligand>
</feature>
<feature type="binding site" evidence="1">
    <location>
        <position position="177"/>
    </location>
    <ligand>
        <name>NADP(+)</name>
        <dbReference type="ChEBI" id="CHEBI:58349"/>
    </ligand>
</feature>
<feature type="binding site" evidence="1">
    <location>
        <position position="179"/>
    </location>
    <ligand>
        <name>substrate</name>
    </ligand>
</feature>
<feature type="binding site" evidence="1">
    <location>
        <position position="186"/>
    </location>
    <ligand>
        <name>substrate</name>
    </ligand>
</feature>
<feature type="binding site" evidence="1">
    <location>
        <begin position="200"/>
        <end position="203"/>
    </location>
    <ligand>
        <name>substrate</name>
    </ligand>
</feature>
<feature type="binding site" evidence="1">
    <location>
        <position position="213"/>
    </location>
    <ligand>
        <name>substrate</name>
    </ligand>
</feature>
<feature type="binding site" evidence="1">
    <location>
        <position position="292"/>
    </location>
    <ligand>
        <name>substrate</name>
    </ligand>
</feature>
<evidence type="ECO:0000255" key="1">
    <source>
        <dbReference type="HAMAP-Rule" id="MF_01601"/>
    </source>
</evidence>
<comment type="function">
    <text evidence="1">Catalyzes the interconversion between ADP-D-glycero-beta-D-manno-heptose and ADP-L-glycero-beta-D-manno-heptose via an epimerization at carbon 6 of the heptose.</text>
</comment>
<comment type="catalytic activity">
    <reaction evidence="1">
        <text>ADP-D-glycero-beta-D-manno-heptose = ADP-L-glycero-beta-D-manno-heptose</text>
        <dbReference type="Rhea" id="RHEA:17577"/>
        <dbReference type="ChEBI" id="CHEBI:59967"/>
        <dbReference type="ChEBI" id="CHEBI:61506"/>
        <dbReference type="EC" id="5.1.3.20"/>
    </reaction>
</comment>
<comment type="cofactor">
    <cofactor evidence="1">
        <name>NADP(+)</name>
        <dbReference type="ChEBI" id="CHEBI:58349"/>
    </cofactor>
    <text evidence="1">Binds 1 NADP(+) per subunit.</text>
</comment>
<comment type="pathway">
    <text evidence="1">Nucleotide-sugar biosynthesis; ADP-L-glycero-beta-D-manno-heptose biosynthesis; ADP-L-glycero-beta-D-manno-heptose from D-glycero-beta-D-manno-heptose 7-phosphate: step 4/4.</text>
</comment>
<comment type="subunit">
    <text evidence="1">Homopentamer.</text>
</comment>
<comment type="domain">
    <text evidence="1">Contains a large N-terminal NADP-binding domain, and a smaller C-terminal substrate-binding domain.</text>
</comment>
<comment type="similarity">
    <text evidence="1">Belongs to the NAD(P)-dependent epimerase/dehydratase family. HldD subfamily.</text>
</comment>
<protein>
    <recommendedName>
        <fullName evidence="1">ADP-L-glycero-D-manno-heptose-6-epimerase</fullName>
        <ecNumber evidence="1">5.1.3.20</ecNumber>
    </recommendedName>
    <alternativeName>
        <fullName evidence="1">ADP-L-glycero-beta-D-manno-heptose-6-epimerase</fullName>
        <shortName evidence="1">ADP-glyceromanno-heptose 6-epimerase</shortName>
        <shortName evidence="1">ADP-hep 6-epimerase</shortName>
        <shortName evidence="1">AGME</shortName>
    </alternativeName>
</protein>
<name>HLDD_BURO1</name>